<protein>
    <recommendedName>
        <fullName evidence="1">Large ribosomal subunit protein uL11</fullName>
    </recommendedName>
    <alternativeName>
        <fullName evidence="2">50S ribosomal protein L11</fullName>
    </alternativeName>
</protein>
<accession>A6VKC9</accession>
<sequence length="142" mass="14933">MAKKVQAYVKLQVAAGMANPSPPVGPALGQQGVNIMEFCKAFNARTESIEKGLPIPVVITVYADRSFTFVTKTPPAAVLLKKAAGIKSGSGKPNKDKVGKVTQDQIRQIAETKAADMTGATIETKMKSIAGTARSMGLVVEE</sequence>
<reference key="1">
    <citation type="journal article" date="2010" name="BMC Genomics">
        <title>A genomic perspective on the potential of Actinobacillus succinogenes for industrial succinate production.</title>
        <authorList>
            <person name="McKinlay J.B."/>
            <person name="Laivenieks M."/>
            <person name="Schindler B.D."/>
            <person name="McKinlay A.A."/>
            <person name="Siddaramappa S."/>
            <person name="Challacombe J.F."/>
            <person name="Lowry S.R."/>
            <person name="Clum A."/>
            <person name="Lapidus A.L."/>
            <person name="Burkhart K.B."/>
            <person name="Harkins V."/>
            <person name="Vieille C."/>
        </authorList>
    </citation>
    <scope>NUCLEOTIDE SEQUENCE [LARGE SCALE GENOMIC DNA]</scope>
    <source>
        <strain>ATCC 55618 / DSM 22257 / CCUG 43843 / 130Z</strain>
    </source>
</reference>
<name>RL11_ACTSZ</name>
<gene>
    <name evidence="1" type="primary">rplK</name>
    <name type="ordered locus">Asuc_0045</name>
</gene>
<comment type="function">
    <text evidence="1">Forms part of the ribosomal stalk which helps the ribosome interact with GTP-bound translation factors.</text>
</comment>
<comment type="subunit">
    <text evidence="1">Part of the ribosomal stalk of the 50S ribosomal subunit. Interacts with L10 and the large rRNA to form the base of the stalk. L10 forms an elongated spine to which L12 dimers bind in a sequential fashion forming a multimeric L10(L12)X complex.</text>
</comment>
<comment type="PTM">
    <text evidence="1">One or more lysine residues are methylated.</text>
</comment>
<comment type="similarity">
    <text evidence="1">Belongs to the universal ribosomal protein uL11 family.</text>
</comment>
<organism>
    <name type="scientific">Actinobacillus succinogenes (strain ATCC 55618 / DSM 22257 / CCUG 43843 / 130Z)</name>
    <dbReference type="NCBI Taxonomy" id="339671"/>
    <lineage>
        <taxon>Bacteria</taxon>
        <taxon>Pseudomonadati</taxon>
        <taxon>Pseudomonadota</taxon>
        <taxon>Gammaproteobacteria</taxon>
        <taxon>Pasteurellales</taxon>
        <taxon>Pasteurellaceae</taxon>
        <taxon>Actinobacillus</taxon>
    </lineage>
</organism>
<keyword id="KW-0488">Methylation</keyword>
<keyword id="KW-1185">Reference proteome</keyword>
<keyword id="KW-0687">Ribonucleoprotein</keyword>
<keyword id="KW-0689">Ribosomal protein</keyword>
<keyword id="KW-0694">RNA-binding</keyword>
<keyword id="KW-0699">rRNA-binding</keyword>
<proteinExistence type="inferred from homology"/>
<dbReference type="EMBL" id="CP000746">
    <property type="protein sequence ID" value="ABR73426.1"/>
    <property type="molecule type" value="Genomic_DNA"/>
</dbReference>
<dbReference type="RefSeq" id="WP_011978702.1">
    <property type="nucleotide sequence ID" value="NC_009655.1"/>
</dbReference>
<dbReference type="SMR" id="A6VKC9"/>
<dbReference type="STRING" id="339671.Asuc_0045"/>
<dbReference type="KEGG" id="asu:Asuc_0045"/>
<dbReference type="eggNOG" id="COG0080">
    <property type="taxonomic scope" value="Bacteria"/>
</dbReference>
<dbReference type="HOGENOM" id="CLU_074237_2_0_6"/>
<dbReference type="OrthoDB" id="9802408at2"/>
<dbReference type="Proteomes" id="UP000001114">
    <property type="component" value="Chromosome"/>
</dbReference>
<dbReference type="GO" id="GO:0022625">
    <property type="term" value="C:cytosolic large ribosomal subunit"/>
    <property type="evidence" value="ECO:0007669"/>
    <property type="project" value="TreeGrafter"/>
</dbReference>
<dbReference type="GO" id="GO:0070180">
    <property type="term" value="F:large ribosomal subunit rRNA binding"/>
    <property type="evidence" value="ECO:0007669"/>
    <property type="project" value="UniProtKB-UniRule"/>
</dbReference>
<dbReference type="GO" id="GO:0003735">
    <property type="term" value="F:structural constituent of ribosome"/>
    <property type="evidence" value="ECO:0007669"/>
    <property type="project" value="InterPro"/>
</dbReference>
<dbReference type="GO" id="GO:0006412">
    <property type="term" value="P:translation"/>
    <property type="evidence" value="ECO:0007669"/>
    <property type="project" value="UniProtKB-UniRule"/>
</dbReference>
<dbReference type="CDD" id="cd00349">
    <property type="entry name" value="Ribosomal_L11"/>
    <property type="match status" value="1"/>
</dbReference>
<dbReference type="FunFam" id="1.10.10.250:FF:000001">
    <property type="entry name" value="50S ribosomal protein L11"/>
    <property type="match status" value="1"/>
</dbReference>
<dbReference type="FunFam" id="3.30.1550.10:FF:000001">
    <property type="entry name" value="50S ribosomal protein L11"/>
    <property type="match status" value="1"/>
</dbReference>
<dbReference type="Gene3D" id="1.10.10.250">
    <property type="entry name" value="Ribosomal protein L11, C-terminal domain"/>
    <property type="match status" value="1"/>
</dbReference>
<dbReference type="Gene3D" id="3.30.1550.10">
    <property type="entry name" value="Ribosomal protein L11/L12, N-terminal domain"/>
    <property type="match status" value="1"/>
</dbReference>
<dbReference type="HAMAP" id="MF_00736">
    <property type="entry name" value="Ribosomal_uL11"/>
    <property type="match status" value="1"/>
</dbReference>
<dbReference type="InterPro" id="IPR000911">
    <property type="entry name" value="Ribosomal_uL11"/>
</dbReference>
<dbReference type="InterPro" id="IPR006519">
    <property type="entry name" value="Ribosomal_uL11_bac-typ"/>
</dbReference>
<dbReference type="InterPro" id="IPR020783">
    <property type="entry name" value="Ribosomal_uL11_C"/>
</dbReference>
<dbReference type="InterPro" id="IPR036769">
    <property type="entry name" value="Ribosomal_uL11_C_sf"/>
</dbReference>
<dbReference type="InterPro" id="IPR020784">
    <property type="entry name" value="Ribosomal_uL11_N"/>
</dbReference>
<dbReference type="InterPro" id="IPR036796">
    <property type="entry name" value="Ribosomal_uL11_N_sf"/>
</dbReference>
<dbReference type="NCBIfam" id="TIGR01632">
    <property type="entry name" value="L11_bact"/>
    <property type="match status" value="1"/>
</dbReference>
<dbReference type="PANTHER" id="PTHR11661">
    <property type="entry name" value="60S RIBOSOMAL PROTEIN L12"/>
    <property type="match status" value="1"/>
</dbReference>
<dbReference type="PANTHER" id="PTHR11661:SF1">
    <property type="entry name" value="LARGE RIBOSOMAL SUBUNIT PROTEIN UL11M"/>
    <property type="match status" value="1"/>
</dbReference>
<dbReference type="Pfam" id="PF00298">
    <property type="entry name" value="Ribosomal_L11"/>
    <property type="match status" value="1"/>
</dbReference>
<dbReference type="Pfam" id="PF03946">
    <property type="entry name" value="Ribosomal_L11_N"/>
    <property type="match status" value="1"/>
</dbReference>
<dbReference type="SMART" id="SM00649">
    <property type="entry name" value="RL11"/>
    <property type="match status" value="1"/>
</dbReference>
<dbReference type="SUPFAM" id="SSF54747">
    <property type="entry name" value="Ribosomal L11/L12e N-terminal domain"/>
    <property type="match status" value="1"/>
</dbReference>
<dbReference type="SUPFAM" id="SSF46906">
    <property type="entry name" value="Ribosomal protein L11, C-terminal domain"/>
    <property type="match status" value="1"/>
</dbReference>
<dbReference type="PROSITE" id="PS00359">
    <property type="entry name" value="RIBOSOMAL_L11"/>
    <property type="match status" value="1"/>
</dbReference>
<evidence type="ECO:0000255" key="1">
    <source>
        <dbReference type="HAMAP-Rule" id="MF_00736"/>
    </source>
</evidence>
<evidence type="ECO:0000305" key="2"/>
<feature type="chain" id="PRO_1000072797" description="Large ribosomal subunit protein uL11">
    <location>
        <begin position="1"/>
        <end position="142"/>
    </location>
</feature>